<comment type="function">
    <text evidence="1">RNA-binding protein implicated in the regulation of several post-transcriptional events. May be involved in pre-mRNA alternative splicing, mRNA translation activation and stability (By similarity). Mediates the rapid and sequence-specific cytoplasmic deadenylation of EDEN-containing maternal mRNAs following fertilization. Binds to AU-rich sequences (AREs) of jun mRNA. Binds to the embryonic deadenylation element (EDEN) motif localized in the 3'-UTR of maternal mRNAs. Binds to RNA containing several repeats of the consensus sequence 5'-UGU-3'. EDEN-dependent deadenylation is enhanced by the presence of an additional cis element composed of three AUU repeats (By similarity).</text>
</comment>
<comment type="subunit">
    <text evidence="1">Oligomer. Oligomerization is required for RNA-binding and EDEN-dependent deadenylation.</text>
</comment>
<comment type="subcellular location">
    <subcellularLocation>
        <location evidence="1">Nucleus</location>
    </subcellularLocation>
    <subcellularLocation>
        <location evidence="1">Cytoplasm</location>
    </subcellularLocation>
</comment>
<comment type="alternative products">
    <event type="alternative splicing"/>
    <isoform>
        <id>Q6PF35-1</id>
        <name>1</name>
        <sequence type="displayed"/>
    </isoform>
    <isoform>
        <id>Q6PF35-2</id>
        <name>2</name>
        <sequence type="described" ref="VSP_026794 VSP_026795"/>
    </isoform>
</comment>
<comment type="domain">
    <text evidence="1">The 2 N-terminal RRMs and a part of the linker region (between RRM2 and RRM3) are necessary for binding to EDEN of mos mRNA.</text>
</comment>
<comment type="PTM">
    <text evidence="1">Phosphorylated during oocyte maturation and dephosphorylated following egg activation. Dephosphorylation is calcium dependent and correlates with the increase in the activity of EDEN-dependent deadenylation (By similarity).</text>
</comment>
<comment type="similarity">
    <text evidence="4">Belongs to the CELF/BRUNOL family.</text>
</comment>
<feature type="chain" id="PRO_0000295187" description="CUGBP Elav-like family member 1-B">
    <location>
        <begin position="1"/>
        <end position="489"/>
    </location>
</feature>
<feature type="domain" description="RRM 1" evidence="2">
    <location>
        <begin position="16"/>
        <end position="99"/>
    </location>
</feature>
<feature type="domain" description="RRM 2" evidence="2">
    <location>
        <begin position="108"/>
        <end position="188"/>
    </location>
</feature>
<feature type="domain" description="RRM 3" evidence="2">
    <location>
        <begin position="404"/>
        <end position="482"/>
    </location>
</feature>
<feature type="splice variant" id="VSP_026794" description="In isoform 2." evidence="3">
    <original>M</original>
    <variation>MASFKLDFLPEMMVDHCSLNSSPVSKKM</variation>
    <location>
        <position position="1"/>
    </location>
</feature>
<feature type="splice variant" id="VSP_026795" description="In isoform 2." evidence="3">
    <original>A</original>
    <variation>GGLNTVLFPEHPAS</variation>
    <location>
        <position position="104"/>
    </location>
</feature>
<feature type="sequence conflict" description="In Ref. 1; AAH70706." evidence="4" ref="1">
    <original>A</original>
    <variation>T</variation>
    <location>
        <position position="290"/>
    </location>
</feature>
<proteinExistence type="evidence at transcript level"/>
<keyword id="KW-0010">Activator</keyword>
<keyword id="KW-0025">Alternative splicing</keyword>
<keyword id="KW-0963">Cytoplasm</keyword>
<keyword id="KW-0507">mRNA processing</keyword>
<keyword id="KW-0508">mRNA splicing</keyword>
<keyword id="KW-0539">Nucleus</keyword>
<keyword id="KW-1185">Reference proteome</keyword>
<keyword id="KW-0677">Repeat</keyword>
<keyword id="KW-0694">RNA-binding</keyword>
<accession>Q6PF35</accession>
<accession>Q6NRN9</accession>
<sequence>MNGTMDHPDHPDSDSIKMFVGQVPRSWSEKELRELFEQYGAVYEINVLRDRSQNPPQSKGCCFITFYTRKAALEAQNALHNMKVLPGMHHPIQMKPADSEKNNAVEDRKLFIGMVSKKCNENDIRTLFSQFGQIEESRILRGPDGMSRGCAFITFTTRSMAQMAIKAMHQAQTMEGCSSPIVVKFADTQKDKEQKRMTQQLQQQMQQLNAASMWGNLAGLGSLAPQYLALLQQTTSSGNLNSLSGLHPMGGEYATGMTSGLNAMQLQNLATLAAAASAAQNTQSAGSALASSSSPLSILTSSGSSPNSNNSSINHMASLGALQTLAGATAGLNVGSLAGMAALNGGLGSSLSNGTGSTMEALSQAYSGIQQYAAAALPSLYNQSLLSQQGLGAAGSQKEGPEGANLFIYHLPQEFGDQDLLQMFMPFGNIVSAKVFIDKQTNLSKCFGFISYDNPVSAQAAIQSMNGFQIGMKRLKVQLKRSKNDSKPY</sequence>
<protein>
    <recommendedName>
        <fullName>CUGBP Elav-like family member 1-B</fullName>
        <shortName>CELF-1B</shortName>
    </recommendedName>
    <alternativeName>
        <fullName>Bruno-like protein 2-B</fullName>
    </alternativeName>
    <alternativeName>
        <fullName>CUG triplet repeat RNA-binding protein 1-B</fullName>
        <shortName>CUG-BP1-B</shortName>
    </alternativeName>
    <alternativeName>
        <fullName>CUG-BP- and ETR-3-like factor 1-B</fullName>
    </alternativeName>
    <alternativeName>
        <fullName>Embryo deadenylation element-binding protein B</fullName>
        <shortName>EDEN-BP-B</shortName>
    </alternativeName>
    <alternativeName>
        <fullName>RNA-binding protein BRUNOL-2-B</fullName>
    </alternativeName>
    <alternativeName>
        <fullName>p53/p55</fullName>
    </alternativeName>
</protein>
<reference key="1">
    <citation type="submission" date="2003-09" db="EMBL/GenBank/DDBJ databases">
        <authorList>
            <consortium name="NIH - Xenopus Gene Collection (XGC) project"/>
        </authorList>
    </citation>
    <scope>NUCLEOTIDE SEQUENCE [LARGE SCALE MRNA] (ISOFORMS 1 AND 2)</scope>
    <source>
        <tissue>Spleen</tissue>
    </source>
</reference>
<organism>
    <name type="scientific">Xenopus laevis</name>
    <name type="common">African clawed frog</name>
    <dbReference type="NCBI Taxonomy" id="8355"/>
    <lineage>
        <taxon>Eukaryota</taxon>
        <taxon>Metazoa</taxon>
        <taxon>Chordata</taxon>
        <taxon>Craniata</taxon>
        <taxon>Vertebrata</taxon>
        <taxon>Euteleostomi</taxon>
        <taxon>Amphibia</taxon>
        <taxon>Batrachia</taxon>
        <taxon>Anura</taxon>
        <taxon>Pipoidea</taxon>
        <taxon>Pipidae</taxon>
        <taxon>Xenopodinae</taxon>
        <taxon>Xenopus</taxon>
        <taxon>Xenopus</taxon>
    </lineage>
</organism>
<name>CEL1B_XENLA</name>
<gene>
    <name type="primary">cugbp1-b</name>
    <name type="synonym">celf1-b</name>
</gene>
<dbReference type="EMBL" id="BC057743">
    <property type="protein sequence ID" value="AAH57743.1"/>
    <property type="molecule type" value="mRNA"/>
</dbReference>
<dbReference type="EMBL" id="BC070706">
    <property type="protein sequence ID" value="AAH70706.1"/>
    <property type="molecule type" value="mRNA"/>
</dbReference>
<dbReference type="RefSeq" id="NP_001079970.1">
    <property type="nucleotide sequence ID" value="NM_001086501.1"/>
</dbReference>
<dbReference type="SMR" id="Q6PF35"/>
<dbReference type="DNASU" id="379661"/>
<dbReference type="GeneID" id="379661"/>
<dbReference type="KEGG" id="xla:379661"/>
<dbReference type="AGR" id="Xenbase:XB-GENE-6255183"/>
<dbReference type="CTD" id="379661"/>
<dbReference type="Xenbase" id="XB-GENE-6255183">
    <property type="gene designation" value="celf1.S"/>
</dbReference>
<dbReference type="OrthoDB" id="410044at2759"/>
<dbReference type="Proteomes" id="UP000186698">
    <property type="component" value="Chromosome 4S"/>
</dbReference>
<dbReference type="Bgee" id="379661">
    <property type="expression patterns" value="Expressed in neurula embryo and 19 other cell types or tissues"/>
</dbReference>
<dbReference type="GO" id="GO:0005737">
    <property type="term" value="C:cytoplasm"/>
    <property type="evidence" value="ECO:0000318"/>
    <property type="project" value="GO_Central"/>
</dbReference>
<dbReference type="GO" id="GO:0005634">
    <property type="term" value="C:nucleus"/>
    <property type="evidence" value="ECO:0000318"/>
    <property type="project" value="GO_Central"/>
</dbReference>
<dbReference type="GO" id="GO:1990904">
    <property type="term" value="C:ribonucleoprotein complex"/>
    <property type="evidence" value="ECO:0000318"/>
    <property type="project" value="GO_Central"/>
</dbReference>
<dbReference type="GO" id="GO:0003730">
    <property type="term" value="F:mRNA 3'-UTR binding"/>
    <property type="evidence" value="ECO:0000318"/>
    <property type="project" value="GO_Central"/>
</dbReference>
<dbReference type="GO" id="GO:0006376">
    <property type="term" value="P:mRNA splice site recognition"/>
    <property type="evidence" value="ECO:0000318"/>
    <property type="project" value="GO_Central"/>
</dbReference>
<dbReference type="GO" id="GO:0000381">
    <property type="term" value="P:regulation of alternative mRNA splicing, via spliceosome"/>
    <property type="evidence" value="ECO:0000318"/>
    <property type="project" value="GO_Central"/>
</dbReference>
<dbReference type="CDD" id="cd12631">
    <property type="entry name" value="RRM1_CELF1_2_Bruno"/>
    <property type="match status" value="1"/>
</dbReference>
<dbReference type="CDD" id="cd12634">
    <property type="entry name" value="RRM2_CELF1_2"/>
    <property type="match status" value="1"/>
</dbReference>
<dbReference type="CDD" id="cd12638">
    <property type="entry name" value="RRM3_CELF1_2"/>
    <property type="match status" value="1"/>
</dbReference>
<dbReference type="FunFam" id="3.30.70.330:FF:000013">
    <property type="entry name" value="CUGBP Elav-like family member 1 isoform 2"/>
    <property type="match status" value="1"/>
</dbReference>
<dbReference type="FunFam" id="3.30.70.330:FF:000015">
    <property type="entry name" value="CUGBP Elav-like family member 1 isoform 2"/>
    <property type="match status" value="1"/>
</dbReference>
<dbReference type="FunFam" id="3.30.70.330:FF:000016">
    <property type="entry name" value="CUGBP Elav-like family member 1 isoform 2"/>
    <property type="match status" value="1"/>
</dbReference>
<dbReference type="Gene3D" id="3.30.70.330">
    <property type="match status" value="3"/>
</dbReference>
<dbReference type="InterPro" id="IPR034196">
    <property type="entry name" value="CELF1/2_RRM1"/>
</dbReference>
<dbReference type="InterPro" id="IPR034198">
    <property type="entry name" value="CELF1/2_RRM2"/>
</dbReference>
<dbReference type="InterPro" id="IPR034199">
    <property type="entry name" value="CELF1/2_RRM3"/>
</dbReference>
<dbReference type="InterPro" id="IPR002343">
    <property type="entry name" value="Hud_Sxl_RNA"/>
</dbReference>
<dbReference type="InterPro" id="IPR012677">
    <property type="entry name" value="Nucleotide-bd_a/b_plait_sf"/>
</dbReference>
<dbReference type="InterPro" id="IPR035979">
    <property type="entry name" value="RBD_domain_sf"/>
</dbReference>
<dbReference type="InterPro" id="IPR000504">
    <property type="entry name" value="RRM_dom"/>
</dbReference>
<dbReference type="PANTHER" id="PTHR24012">
    <property type="entry name" value="RNA BINDING PROTEIN"/>
    <property type="match status" value="1"/>
</dbReference>
<dbReference type="Pfam" id="PF00076">
    <property type="entry name" value="RRM_1"/>
    <property type="match status" value="3"/>
</dbReference>
<dbReference type="PRINTS" id="PR00961">
    <property type="entry name" value="HUDSXLRNA"/>
</dbReference>
<dbReference type="SMART" id="SM00360">
    <property type="entry name" value="RRM"/>
    <property type="match status" value="3"/>
</dbReference>
<dbReference type="SUPFAM" id="SSF54928">
    <property type="entry name" value="RNA-binding domain, RBD"/>
    <property type="match status" value="2"/>
</dbReference>
<dbReference type="PROSITE" id="PS50102">
    <property type="entry name" value="RRM"/>
    <property type="match status" value="3"/>
</dbReference>
<evidence type="ECO:0000250" key="1"/>
<evidence type="ECO:0000255" key="2">
    <source>
        <dbReference type="PROSITE-ProRule" id="PRU00176"/>
    </source>
</evidence>
<evidence type="ECO:0000303" key="3">
    <source ref="1"/>
</evidence>
<evidence type="ECO:0000305" key="4"/>